<organism>
    <name type="scientific">Bradyrhizobium sp. (strain ORS 278)</name>
    <dbReference type="NCBI Taxonomy" id="114615"/>
    <lineage>
        <taxon>Bacteria</taxon>
        <taxon>Pseudomonadati</taxon>
        <taxon>Pseudomonadota</taxon>
        <taxon>Alphaproteobacteria</taxon>
        <taxon>Hyphomicrobiales</taxon>
        <taxon>Nitrobacteraceae</taxon>
        <taxon>Bradyrhizobium</taxon>
    </lineage>
</organism>
<sequence length="111" mass="12104">MEPSMIVVTTENVTGYRTVRMLGQCFGVVVRSRGIGGNFIASLRSIVGGEIHEYTQMLEEARRHALDRLVHNATSMGANAIVMMRFDSAEIGQTMSEIVAYGTAAVIEPAR</sequence>
<reference key="1">
    <citation type="journal article" date="2007" name="Science">
        <title>Legumes symbioses: absence of nod genes in photosynthetic bradyrhizobia.</title>
        <authorList>
            <person name="Giraud E."/>
            <person name="Moulin L."/>
            <person name="Vallenet D."/>
            <person name="Barbe V."/>
            <person name="Cytryn E."/>
            <person name="Avarre J.-C."/>
            <person name="Jaubert M."/>
            <person name="Simon D."/>
            <person name="Cartieaux F."/>
            <person name="Prin Y."/>
            <person name="Bena G."/>
            <person name="Hannibal L."/>
            <person name="Fardoux J."/>
            <person name="Kojadinovic M."/>
            <person name="Vuillet L."/>
            <person name="Lajus A."/>
            <person name="Cruveiller S."/>
            <person name="Rouy Z."/>
            <person name="Mangenot S."/>
            <person name="Segurens B."/>
            <person name="Dossat C."/>
            <person name="Franck W.L."/>
            <person name="Chang W.-S."/>
            <person name="Saunders E."/>
            <person name="Bruce D."/>
            <person name="Richardson P."/>
            <person name="Normand P."/>
            <person name="Dreyfus B."/>
            <person name="Pignol D."/>
            <person name="Stacey G."/>
            <person name="Emerich D."/>
            <person name="Vermeglio A."/>
            <person name="Medigue C."/>
            <person name="Sadowsky M."/>
        </authorList>
    </citation>
    <scope>NUCLEOTIDE SEQUENCE [LARGE SCALE GENOMIC DNA]</scope>
    <source>
        <strain>ORS 278</strain>
    </source>
</reference>
<evidence type="ECO:0000255" key="1">
    <source>
        <dbReference type="HAMAP-Rule" id="MF_00338"/>
    </source>
</evidence>
<accession>A4Z2C2</accession>
<dbReference type="EMBL" id="CU234118">
    <property type="protein sequence ID" value="CAL80298.1"/>
    <property type="molecule type" value="Genomic_DNA"/>
</dbReference>
<dbReference type="SMR" id="A4Z2C2"/>
<dbReference type="STRING" id="114615.BRADO6695"/>
<dbReference type="KEGG" id="bra:BRADO6695"/>
<dbReference type="eggNOG" id="COG0393">
    <property type="taxonomic scope" value="Bacteria"/>
</dbReference>
<dbReference type="HOGENOM" id="CLU_117144_1_1_5"/>
<dbReference type="Proteomes" id="UP000001994">
    <property type="component" value="Chromosome"/>
</dbReference>
<dbReference type="Gene3D" id="3.30.110.70">
    <property type="entry name" value="Hypothetical protein apc22750. Chain B"/>
    <property type="match status" value="1"/>
</dbReference>
<dbReference type="HAMAP" id="MF_00338">
    <property type="entry name" value="UPF0145"/>
    <property type="match status" value="1"/>
</dbReference>
<dbReference type="InterPro" id="IPR035439">
    <property type="entry name" value="UPF0145_dom_sf"/>
</dbReference>
<dbReference type="InterPro" id="IPR002765">
    <property type="entry name" value="UPF0145_YbjQ-like"/>
</dbReference>
<dbReference type="PANTHER" id="PTHR34068:SF2">
    <property type="entry name" value="UPF0145 PROTEIN SCO3412"/>
    <property type="match status" value="1"/>
</dbReference>
<dbReference type="PANTHER" id="PTHR34068">
    <property type="entry name" value="UPF0145 PROTEIN YBJQ"/>
    <property type="match status" value="1"/>
</dbReference>
<dbReference type="Pfam" id="PF01906">
    <property type="entry name" value="YbjQ_1"/>
    <property type="match status" value="1"/>
</dbReference>
<dbReference type="SUPFAM" id="SSF117782">
    <property type="entry name" value="YbjQ-like"/>
    <property type="match status" value="1"/>
</dbReference>
<proteinExistence type="inferred from homology"/>
<feature type="chain" id="PRO_1000012977" description="UPF0145 protein BRADO6695">
    <location>
        <begin position="1"/>
        <end position="111"/>
    </location>
</feature>
<comment type="similarity">
    <text evidence="1">Belongs to the UPF0145 family.</text>
</comment>
<protein>
    <recommendedName>
        <fullName evidence="1">UPF0145 protein BRADO6695</fullName>
    </recommendedName>
</protein>
<name>Y6695_BRASO</name>
<gene>
    <name type="ordered locus">BRADO6695</name>
</gene>
<keyword id="KW-1185">Reference proteome</keyword>